<gene>
    <name evidence="1" type="primary">rutD</name>
    <name type="ordered locus">ECIAI39_2146</name>
</gene>
<accession>B7NLB7</accession>
<protein>
    <recommendedName>
        <fullName evidence="1">Putative carbamate hydrolase RutD</fullName>
        <ecNumber evidence="1">3.5.1.-</ecNumber>
    </recommendedName>
    <alternativeName>
        <fullName evidence="1">Aminohydrolase</fullName>
    </alternativeName>
</protein>
<keyword id="KW-0378">Hydrolase</keyword>
<reference key="1">
    <citation type="journal article" date="2009" name="PLoS Genet.">
        <title>Organised genome dynamics in the Escherichia coli species results in highly diverse adaptive paths.</title>
        <authorList>
            <person name="Touchon M."/>
            <person name="Hoede C."/>
            <person name="Tenaillon O."/>
            <person name="Barbe V."/>
            <person name="Baeriswyl S."/>
            <person name="Bidet P."/>
            <person name="Bingen E."/>
            <person name="Bonacorsi S."/>
            <person name="Bouchier C."/>
            <person name="Bouvet O."/>
            <person name="Calteau A."/>
            <person name="Chiapello H."/>
            <person name="Clermont O."/>
            <person name="Cruveiller S."/>
            <person name="Danchin A."/>
            <person name="Diard M."/>
            <person name="Dossat C."/>
            <person name="Karoui M.E."/>
            <person name="Frapy E."/>
            <person name="Garry L."/>
            <person name="Ghigo J.M."/>
            <person name="Gilles A.M."/>
            <person name="Johnson J."/>
            <person name="Le Bouguenec C."/>
            <person name="Lescat M."/>
            <person name="Mangenot S."/>
            <person name="Martinez-Jehanne V."/>
            <person name="Matic I."/>
            <person name="Nassif X."/>
            <person name="Oztas S."/>
            <person name="Petit M.A."/>
            <person name="Pichon C."/>
            <person name="Rouy Z."/>
            <person name="Ruf C.S."/>
            <person name="Schneider D."/>
            <person name="Tourret J."/>
            <person name="Vacherie B."/>
            <person name="Vallenet D."/>
            <person name="Medigue C."/>
            <person name="Rocha E.P.C."/>
            <person name="Denamur E."/>
        </authorList>
    </citation>
    <scope>NUCLEOTIDE SEQUENCE [LARGE SCALE GENOMIC DNA]</scope>
    <source>
        <strain>IAI39 / ExPEC</strain>
    </source>
</reference>
<sequence>MKLSLSPPPYADAPVVVLISGLGGSGSYWLPQLAVLEQEYQVVCYDQRGTGNNPDTLAEDYSIAQMAAELHQALVAAGIERYAVVGHALGALVGMQLALDYPASVTVLVSVNGWLRINAHTRRCFQVREQLLHSGGAQAWVAAQPLFLYPADWMAARAPRLEAEDALALAHFQGKNNLLRRLNALKRADFSHHADRIRCPVQIICASDDLLVPTACSSELHAALPDSQKMVMRYGGHACNVTDPETFNALLLNGLASLLHHREAAL</sequence>
<dbReference type="EC" id="3.5.1.-" evidence="1"/>
<dbReference type="EMBL" id="CU928164">
    <property type="protein sequence ID" value="CAR18273.1"/>
    <property type="molecule type" value="Genomic_DNA"/>
</dbReference>
<dbReference type="RefSeq" id="WP_001400192.1">
    <property type="nucleotide sequence ID" value="NC_011750.1"/>
</dbReference>
<dbReference type="RefSeq" id="YP_002408109.1">
    <property type="nucleotide sequence ID" value="NC_011750.1"/>
</dbReference>
<dbReference type="SMR" id="B7NLB7"/>
<dbReference type="STRING" id="585057.ECIAI39_2146"/>
<dbReference type="ESTHER" id="ecoli-rutD">
    <property type="family name" value="RutD"/>
</dbReference>
<dbReference type="KEGG" id="ect:ECIAI39_2146"/>
<dbReference type="PATRIC" id="fig|585057.6.peg.2234"/>
<dbReference type="HOGENOM" id="CLU_020336_50_1_6"/>
<dbReference type="Proteomes" id="UP000000749">
    <property type="component" value="Chromosome"/>
</dbReference>
<dbReference type="GO" id="GO:0016811">
    <property type="term" value="F:hydrolase activity, acting on carbon-nitrogen (but not peptide) bonds, in linear amides"/>
    <property type="evidence" value="ECO:0007669"/>
    <property type="project" value="InterPro"/>
</dbReference>
<dbReference type="GO" id="GO:0019740">
    <property type="term" value="P:nitrogen utilization"/>
    <property type="evidence" value="ECO:0007669"/>
    <property type="project" value="UniProtKB-UniRule"/>
</dbReference>
<dbReference type="GO" id="GO:0006212">
    <property type="term" value="P:uracil catabolic process"/>
    <property type="evidence" value="ECO:0007669"/>
    <property type="project" value="UniProtKB-UniRule"/>
</dbReference>
<dbReference type="FunFam" id="3.40.50.1820:FF:000052">
    <property type="entry name" value="Putative aminoacrylate hydrolase RutD"/>
    <property type="match status" value="1"/>
</dbReference>
<dbReference type="Gene3D" id="3.40.50.1820">
    <property type="entry name" value="alpha/beta hydrolase"/>
    <property type="match status" value="1"/>
</dbReference>
<dbReference type="HAMAP" id="MF_00832">
    <property type="entry name" value="RutD"/>
    <property type="match status" value="1"/>
</dbReference>
<dbReference type="InterPro" id="IPR000073">
    <property type="entry name" value="AB_hydrolase_1"/>
</dbReference>
<dbReference type="InterPro" id="IPR029058">
    <property type="entry name" value="AB_hydrolase_fold"/>
</dbReference>
<dbReference type="InterPro" id="IPR050266">
    <property type="entry name" value="AB_hydrolase_sf"/>
</dbReference>
<dbReference type="InterPro" id="IPR019913">
    <property type="entry name" value="Pyrimidine_utilisation_RutD"/>
</dbReference>
<dbReference type="NCBIfam" id="TIGR03611">
    <property type="entry name" value="RutD"/>
    <property type="match status" value="1"/>
</dbReference>
<dbReference type="PANTHER" id="PTHR43798">
    <property type="entry name" value="MONOACYLGLYCEROL LIPASE"/>
    <property type="match status" value="1"/>
</dbReference>
<dbReference type="Pfam" id="PF00561">
    <property type="entry name" value="Abhydrolase_1"/>
    <property type="match status" value="1"/>
</dbReference>
<dbReference type="PRINTS" id="PR00111">
    <property type="entry name" value="ABHYDROLASE"/>
</dbReference>
<dbReference type="SUPFAM" id="SSF53474">
    <property type="entry name" value="alpha/beta-Hydrolases"/>
    <property type="match status" value="1"/>
</dbReference>
<feature type="chain" id="PRO_0000402963" description="Putative carbamate hydrolase RutD">
    <location>
        <begin position="1"/>
        <end position="266"/>
    </location>
</feature>
<evidence type="ECO:0000255" key="1">
    <source>
        <dbReference type="HAMAP-Rule" id="MF_00832"/>
    </source>
</evidence>
<name>RUTD_ECO7I</name>
<comment type="function">
    <text evidence="1">Involved in pyrimidine catabolism. May facilitate the hydrolysis of carbamate, a reaction that can also occur spontaneously.</text>
</comment>
<comment type="catalytic activity">
    <reaction evidence="1">
        <text>carbamate + 2 H(+) = NH4(+) + CO2</text>
        <dbReference type="Rhea" id="RHEA:15649"/>
        <dbReference type="ChEBI" id="CHEBI:13941"/>
        <dbReference type="ChEBI" id="CHEBI:15378"/>
        <dbReference type="ChEBI" id="CHEBI:16526"/>
        <dbReference type="ChEBI" id="CHEBI:28938"/>
    </reaction>
</comment>
<comment type="similarity">
    <text evidence="1">Belongs to the AB hydrolase superfamily. Hydrolase RutD family.</text>
</comment>
<proteinExistence type="inferred from homology"/>
<organism>
    <name type="scientific">Escherichia coli O7:K1 (strain IAI39 / ExPEC)</name>
    <dbReference type="NCBI Taxonomy" id="585057"/>
    <lineage>
        <taxon>Bacteria</taxon>
        <taxon>Pseudomonadati</taxon>
        <taxon>Pseudomonadota</taxon>
        <taxon>Gammaproteobacteria</taxon>
        <taxon>Enterobacterales</taxon>
        <taxon>Enterobacteriaceae</taxon>
        <taxon>Escherichia</taxon>
    </lineage>
</organism>